<keyword id="KW-0002">3D-structure</keyword>
<keyword id="KW-0846">Cobalamin</keyword>
<keyword id="KW-0170">Cobalt</keyword>
<keyword id="KW-0903">Direct protein sequencing</keyword>
<keyword id="KW-0413">Isomerase</keyword>
<name>GLME_CLOCO</name>
<evidence type="ECO:0000255" key="1">
    <source>
        <dbReference type="HAMAP-Rule" id="MF_01923"/>
    </source>
</evidence>
<evidence type="ECO:0000269" key="2">
    <source>
    </source>
</evidence>
<evidence type="ECO:0000269" key="3">
    <source>
    </source>
</evidence>
<evidence type="ECO:0000269" key="4">
    <source>
    </source>
</evidence>
<evidence type="ECO:0000269" key="5">
    <source>
    </source>
</evidence>
<evidence type="ECO:0007829" key="6">
    <source>
        <dbReference type="PDB" id="1CCW"/>
    </source>
</evidence>
<comment type="function">
    <text evidence="1 4 5">Catalyzes the carbon skeleton rearrangement of L-glutamate to L-threo-3-methylaspartate ((2S,3S)-3-methylaspartate).</text>
</comment>
<comment type="catalytic activity">
    <reaction evidence="1 4 5">
        <text>(2S,3S)-3-methyl-L-aspartate = L-glutamate</text>
        <dbReference type="Rhea" id="RHEA:12857"/>
        <dbReference type="ChEBI" id="CHEBI:29985"/>
        <dbReference type="ChEBI" id="CHEBI:58724"/>
        <dbReference type="EC" id="5.4.99.1"/>
    </reaction>
</comment>
<comment type="cofactor">
    <cofactor evidence="1 2 3 4 5">
        <name>adenosylcob(III)alamin</name>
        <dbReference type="ChEBI" id="CHEBI:18408"/>
    </cofactor>
</comment>
<comment type="activity regulation">
    <text evidence="4 5">Competitively inhibited by (2S,4S)-4-fluoroglutamate, 2-methyleneglutarate, (2R,3RS)-3-fluoroglutamate and (S)-3-methylitaconate.</text>
</comment>
<comment type="pathway">
    <text evidence="1">Amino-acid degradation; L-glutamate degradation via mesaconate pathway; acetate and pyruvate from L-glutamate: step 1/4.</text>
</comment>
<comment type="subunit">
    <text evidence="1 2 3 4 5">Heterotetramer composed of 2 epsilon subunits (GlmE) and 2 sigma subunits (GlmS). GlmE exists as a homodimer and GlmS as a monomer.</text>
</comment>
<comment type="interaction">
    <interactant intactId="EBI-1028142">
        <id>P80077</id>
    </interactant>
    <interactant intactId="EBI-1028147">
        <id>P80078</id>
        <label>glmS</label>
    </interactant>
    <organismsDiffer>false</organismsDiffer>
    <experiments>2</experiments>
</comment>
<comment type="similarity">
    <text evidence="1">Belongs to the methylaspartate mutase GlmE subunit family.</text>
</comment>
<accession>P80077</accession>
<gene>
    <name evidence="1" type="primary">glmE</name>
</gene>
<feature type="chain" id="PRO_0000087511" description="Glutamate mutase epsilon subunit">
    <location>
        <begin position="1"/>
        <end position="483"/>
    </location>
</feature>
<feature type="binding site">
    <location>
        <position position="66"/>
    </location>
    <ligand>
        <name>L-glutamate</name>
        <dbReference type="ChEBI" id="CHEBI:29985"/>
    </ligand>
</feature>
<feature type="binding site">
    <location>
        <position position="68"/>
    </location>
    <ligand>
        <name>adenosylcob(III)alamin</name>
        <dbReference type="ChEBI" id="CHEBI:18408"/>
    </ligand>
</feature>
<feature type="binding site">
    <location>
        <position position="100"/>
    </location>
    <ligand>
        <name>L-glutamate</name>
        <dbReference type="ChEBI" id="CHEBI:29985"/>
    </ligand>
</feature>
<feature type="binding site">
    <location>
        <position position="123"/>
    </location>
    <ligand>
        <name>adenosylcob(III)alamin</name>
        <dbReference type="ChEBI" id="CHEBI:18408"/>
    </ligand>
</feature>
<feature type="binding site">
    <location>
        <begin position="149"/>
        <end position="150"/>
    </location>
    <ligand>
        <name>L-glutamate</name>
        <dbReference type="ChEBI" id="CHEBI:29985"/>
    </ligand>
</feature>
<feature type="binding site">
    <location>
        <position position="171"/>
    </location>
    <ligand>
        <name>L-glutamate</name>
        <dbReference type="ChEBI" id="CHEBI:29985"/>
    </ligand>
</feature>
<feature type="binding site">
    <location>
        <position position="177"/>
    </location>
    <ligand>
        <name>L-glutamate</name>
        <dbReference type="ChEBI" id="CHEBI:29985"/>
    </ligand>
</feature>
<feature type="binding site">
    <location>
        <position position="180"/>
    </location>
    <ligand>
        <name>adenosylcob(III)alamin</name>
        <dbReference type="ChEBI" id="CHEBI:18408"/>
    </ligand>
</feature>
<feature type="binding site">
    <location>
        <position position="181"/>
    </location>
    <ligand>
        <name>L-glutamate</name>
        <dbReference type="ChEBI" id="CHEBI:29985"/>
    </ligand>
</feature>
<feature type="binding site">
    <location>
        <position position="297"/>
    </location>
    <ligand>
        <name>adenosylcob(III)alamin</name>
        <dbReference type="ChEBI" id="CHEBI:18408"/>
    </ligand>
</feature>
<feature type="binding site">
    <location>
        <position position="326"/>
    </location>
    <ligand>
        <name>adenosylcob(III)alamin</name>
        <dbReference type="ChEBI" id="CHEBI:18408"/>
    </ligand>
</feature>
<feature type="binding site">
    <location>
        <position position="330"/>
    </location>
    <ligand>
        <name>adenosylcob(III)alamin</name>
        <dbReference type="ChEBI" id="CHEBI:18408"/>
    </ligand>
</feature>
<feature type="binding site">
    <location>
        <position position="334"/>
    </location>
    <ligand>
        <name>adenosylcob(III)alamin</name>
        <dbReference type="ChEBI" id="CHEBI:18408"/>
    </ligand>
</feature>
<feature type="helix" evidence="6">
    <location>
        <begin position="10"/>
        <end position="20"/>
    </location>
</feature>
<feature type="helix" evidence="6">
    <location>
        <begin position="21"/>
        <end position="23"/>
    </location>
</feature>
<feature type="helix" evidence="6">
    <location>
        <begin position="25"/>
        <end position="29"/>
    </location>
</feature>
<feature type="helix" evidence="6">
    <location>
        <begin position="32"/>
        <end position="40"/>
    </location>
</feature>
<feature type="helix" evidence="6">
    <location>
        <begin position="44"/>
        <end position="46"/>
    </location>
</feature>
<feature type="helix" evidence="6">
    <location>
        <begin position="48"/>
        <end position="58"/>
    </location>
</feature>
<feature type="strand" evidence="6">
    <location>
        <begin position="62"/>
        <end position="64"/>
    </location>
</feature>
<feature type="helix" evidence="6">
    <location>
        <begin position="72"/>
        <end position="84"/>
    </location>
</feature>
<feature type="strand" evidence="6">
    <location>
        <begin position="89"/>
        <end position="95"/>
    </location>
</feature>
<feature type="helix" evidence="6">
    <location>
        <begin position="99"/>
        <end position="101"/>
    </location>
</feature>
<feature type="helix" evidence="6">
    <location>
        <begin position="104"/>
        <end position="117"/>
    </location>
</feature>
<feature type="strand" evidence="6">
    <location>
        <begin position="122"/>
        <end position="125"/>
    </location>
</feature>
<feature type="helix" evidence="6">
    <location>
        <begin position="127"/>
        <end position="141"/>
    </location>
</feature>
<feature type="strand" evidence="6">
    <location>
        <begin position="146"/>
        <end position="149"/>
    </location>
</feature>
<feature type="helix" evidence="6">
    <location>
        <begin position="156"/>
        <end position="164"/>
    </location>
</feature>
<feature type="strand" evidence="6">
    <location>
        <begin position="169"/>
        <end position="171"/>
    </location>
</feature>
<feature type="turn" evidence="6">
    <location>
        <begin position="174"/>
        <end position="181"/>
    </location>
</feature>
<feature type="helix" evidence="6">
    <location>
        <begin position="187"/>
        <end position="206"/>
    </location>
</feature>
<feature type="strand" evidence="6">
    <location>
        <begin position="212"/>
        <end position="214"/>
    </location>
</feature>
<feature type="turn" evidence="6">
    <location>
        <begin position="217"/>
        <end position="220"/>
    </location>
</feature>
<feature type="strand" evidence="6">
    <location>
        <begin position="221"/>
        <end position="223"/>
    </location>
</feature>
<feature type="helix" evidence="6">
    <location>
        <begin position="226"/>
        <end position="242"/>
    </location>
</feature>
<feature type="strand" evidence="6">
    <location>
        <begin position="247"/>
        <end position="253"/>
    </location>
</feature>
<feature type="helix" evidence="6">
    <location>
        <begin position="258"/>
        <end position="278"/>
    </location>
</feature>
<feature type="strand" evidence="6">
    <location>
        <begin position="285"/>
        <end position="291"/>
    </location>
</feature>
<feature type="helix" evidence="6">
    <location>
        <begin position="301"/>
        <end position="318"/>
    </location>
</feature>
<feature type="strand" evidence="6">
    <location>
        <begin position="321"/>
        <end position="324"/>
    </location>
</feature>
<feature type="turn" evidence="6">
    <location>
        <begin position="328"/>
        <end position="332"/>
    </location>
</feature>
<feature type="helix" evidence="6">
    <location>
        <begin position="337"/>
        <end position="353"/>
    </location>
</feature>
<feature type="turn" evidence="6">
    <location>
        <begin position="354"/>
        <end position="356"/>
    </location>
</feature>
<feature type="helix" evidence="6">
    <location>
        <begin position="363"/>
        <end position="386"/>
    </location>
</feature>
<feature type="turn" evidence="6">
    <location>
        <begin position="387"/>
        <end position="389"/>
    </location>
</feature>
<feature type="helix" evidence="6">
    <location>
        <begin position="391"/>
        <end position="400"/>
    </location>
</feature>
<feature type="strand" evidence="6">
    <location>
        <begin position="419"/>
        <end position="422"/>
    </location>
</feature>
<feature type="strand" evidence="6">
    <location>
        <begin position="428"/>
        <end position="432"/>
    </location>
</feature>
<feature type="helix" evidence="6">
    <location>
        <begin position="440"/>
        <end position="457"/>
    </location>
</feature>
<feature type="helix" evidence="6">
    <location>
        <begin position="463"/>
        <end position="472"/>
    </location>
</feature>
<feature type="turn" evidence="6">
    <location>
        <begin position="473"/>
        <end position="476"/>
    </location>
</feature>
<feature type="strand" evidence="6">
    <location>
        <begin position="477"/>
        <end position="479"/>
    </location>
</feature>
<dbReference type="EC" id="5.4.99.1" evidence="1"/>
<dbReference type="EMBL" id="X80997">
    <property type="protein sequence ID" value="CAA56923.1"/>
    <property type="molecule type" value="Genomic_DNA"/>
</dbReference>
<dbReference type="PIR" id="I40662">
    <property type="entry name" value="I40662"/>
</dbReference>
<dbReference type="PDB" id="1CB7">
    <property type="method" value="X-ray"/>
    <property type="resolution" value="2.00 A"/>
    <property type="chains" value="B/D=1-483"/>
</dbReference>
<dbReference type="PDB" id="1CCW">
    <property type="method" value="X-ray"/>
    <property type="resolution" value="1.60 A"/>
    <property type="chains" value="B/D=1-483"/>
</dbReference>
<dbReference type="PDB" id="1I9C">
    <property type="method" value="X-ray"/>
    <property type="resolution" value="1.90 A"/>
    <property type="chains" value="B/D=1-483"/>
</dbReference>
<dbReference type="PDB" id="6H9E">
    <property type="method" value="X-ray"/>
    <property type="resolution" value="1.82 A"/>
    <property type="chains" value="B/D=1-483"/>
</dbReference>
<dbReference type="PDB" id="6H9F">
    <property type="method" value="X-ray"/>
    <property type="resolution" value="2.10 A"/>
    <property type="chains" value="B/D=1-483"/>
</dbReference>
<dbReference type="PDBsum" id="1CB7"/>
<dbReference type="PDBsum" id="1CCW"/>
<dbReference type="PDBsum" id="1I9C"/>
<dbReference type="PDBsum" id="6H9E"/>
<dbReference type="PDBsum" id="6H9F"/>
<dbReference type="SMR" id="P80077"/>
<dbReference type="IntAct" id="P80077">
    <property type="interactions" value="1"/>
</dbReference>
<dbReference type="STRING" id="1494.SAMN05216497_1185"/>
<dbReference type="BioCyc" id="MetaCyc:MONOMER-1101"/>
<dbReference type="SABIO-RK" id="P80077"/>
<dbReference type="UniPathway" id="UPA00561">
    <property type="reaction ID" value="UER00617"/>
</dbReference>
<dbReference type="EvolutionaryTrace" id="P80077"/>
<dbReference type="GO" id="GO:0031419">
    <property type="term" value="F:cobalamin binding"/>
    <property type="evidence" value="ECO:0007669"/>
    <property type="project" value="UniProtKB-KW"/>
</dbReference>
<dbReference type="GO" id="GO:0050097">
    <property type="term" value="F:methylaspartate mutase activity"/>
    <property type="evidence" value="ECO:0007669"/>
    <property type="project" value="UniProtKB-UniRule"/>
</dbReference>
<dbReference type="GO" id="GO:0019670">
    <property type="term" value="P:anaerobic glutamate catabolic process"/>
    <property type="evidence" value="ECO:0007669"/>
    <property type="project" value="InterPro"/>
</dbReference>
<dbReference type="GO" id="GO:0019553">
    <property type="term" value="P:glutamate catabolic process via L-citramalate"/>
    <property type="evidence" value="ECO:0007669"/>
    <property type="project" value="UniProtKB-UniRule"/>
</dbReference>
<dbReference type="CDD" id="cd00245">
    <property type="entry name" value="Glm_e"/>
    <property type="match status" value="1"/>
</dbReference>
<dbReference type="Gene3D" id="3.90.970.10">
    <property type="match status" value="1"/>
</dbReference>
<dbReference type="Gene3D" id="3.20.20.240">
    <property type="entry name" value="Methylmalonyl-CoA mutase"/>
    <property type="match status" value="1"/>
</dbReference>
<dbReference type="HAMAP" id="MF_01923">
    <property type="entry name" value="Me_Asp_mutase_E"/>
    <property type="match status" value="1"/>
</dbReference>
<dbReference type="InterPro" id="IPR016176">
    <property type="entry name" value="Cbl-dep_enz_cat"/>
</dbReference>
<dbReference type="InterPro" id="IPR006396">
    <property type="entry name" value="Glu_mut_E"/>
</dbReference>
<dbReference type="InterPro" id="IPR014714">
    <property type="entry name" value="Glu_mut_E_C_dom_sf"/>
</dbReference>
<dbReference type="NCBIfam" id="TIGR01503">
    <property type="entry name" value="MthylAspMut_E"/>
    <property type="match status" value="1"/>
</dbReference>
<dbReference type="Pfam" id="PF06368">
    <property type="entry name" value="Met_asp_mut_E"/>
    <property type="match status" value="1"/>
</dbReference>
<dbReference type="PIRSF" id="PIRSF001495">
    <property type="entry name" value="Met_asp_mut_epsi"/>
    <property type="match status" value="1"/>
</dbReference>
<dbReference type="SUPFAM" id="SSF51703">
    <property type="entry name" value="Cobalamin (vitamin B12)-dependent enzymes"/>
    <property type="match status" value="1"/>
</dbReference>
<proteinExistence type="evidence at protein level"/>
<protein>
    <recommendedName>
        <fullName evidence="1">Glutamate mutase epsilon subunit</fullName>
        <ecNumber evidence="1">5.4.99.1</ecNumber>
    </recommendedName>
    <alternativeName>
        <fullName evidence="1">Glutamate mutase E chain</fullName>
    </alternativeName>
    <alternativeName>
        <fullName evidence="1">Glutamate mutase large subunit</fullName>
    </alternativeName>
    <alternativeName>
        <fullName evidence="1">Methylaspartate mutase</fullName>
    </alternativeName>
</protein>
<sequence>MELKNKKWTDEEFHKQREEVLQQWPTGKEVDLQEAVDYLKKIPAEKNFAEKLVLAKKKGITMAQPRAGVALLDEHIELLRYLQDEGGADFLPSTIDAYTRQNRYDECENGIKESEKAGRSLLNGFPGVNYGVKGCRKVLEAVNLPLQARHGTPDSRLLAEIIHAGGWTSNEGGGISYNVPYAKNVTIEKSLLDWQYCDRLVGFYEEQGVHINREPFGPLTGTLVPPSMSNAVGITEALLAAEQGVKNITVGYGECGNMIQDIAALRCLEEQTNEYLKAYGYNDVFVTTVFHQWMGGFPQDESKAFGVIVTATTIAALAGATKVIVKTPHEAIGIPTKEANAAGIKATKMALNMLEGQRMPMSKELETEMAVIKAETKCILDKMFELGKGDLAIGTVKAFETGVMDIPFGPSKYNAGKMMPVRDNLGCVRYLEFGNVPFTEEIKNYNRERLQERAKFEGRDVSFQMVIDDIFAVGKGRLIGRPE</sequence>
<reference key="1">
    <citation type="journal article" date="1994" name="Eur. J. Biochem.">
        <title>Characterization of the coenzyme-B12-dependent glutamate mutase from Clostridium cochlearium produced in Escherichia coli.</title>
        <authorList>
            <person name="Zelder O."/>
            <person name="Beatrix B."/>
            <person name="Leutbecher U."/>
            <person name="Buckel W."/>
        </authorList>
    </citation>
    <scope>NUCLEOTIDE SEQUENCE [GENOMIC DNA]</scope>
    <scope>FUNCTION</scope>
    <scope>CATALYTIC ACTIVITY</scope>
    <scope>ACTIVITY REGULATION</scope>
    <scope>COFACTOR</scope>
    <scope>SUBUNIT</scope>
    <source>
        <strain>ATCC 17787 / DSM 1285 / NCIB 10633</strain>
    </source>
</reference>
<reference key="2">
    <citation type="journal article" date="1992" name="Eur. J. Biochem.">
        <title>Glutamate mutase from Clostridium cochlearium. Purification, cobamide content and stereospecific inhibitors.</title>
        <authorList>
            <person name="Leutbecher U."/>
            <person name="Boecher R."/>
            <person name="Linder D."/>
            <person name="Buckel W."/>
        </authorList>
    </citation>
    <scope>PROTEIN SEQUENCE OF 1-26</scope>
    <scope>FUNCTION</scope>
    <scope>CATALYTIC ACTIVITY</scope>
    <scope>ACTIVITY REGULATION</scope>
    <scope>COFACTOR</scope>
    <scope>SUBUNIT</scope>
    <source>
        <strain>ATCC 17787 / DSM 1285 / NCIB 10633</strain>
    </source>
</reference>
<reference key="3">
    <citation type="journal article" date="1999" name="Structure">
        <title>Glutamate mutase from Clostridium cochlearium: the structure of a coenzyme B12-dependent enzyme provides new mechanistic insights.</title>
        <authorList>
            <person name="Reitzer R."/>
            <person name="Gruber K."/>
            <person name="Jogl G."/>
            <person name="Wagner U.G."/>
            <person name="Bothe H."/>
            <person name="Buckel W."/>
            <person name="Kratky C."/>
        </authorList>
    </citation>
    <scope>X-RAY CRYSTALLOGRAPHY (1.6 ANGSTROMS) IN COMPLEX WITH COBALAMIN ANALOGS</scope>
    <scope>COFACTOR</scope>
    <scope>SUBUNIT</scope>
    <source>
        <strain>ATCC 17787 / DSM 1285 / NCIB 10633</strain>
    </source>
</reference>
<reference key="4">
    <citation type="journal article" date="2001" name="Angew. Chem. Int. Ed. Engl.">
        <title>Radical shuttling in a protein: ribose pseudorotation controls alkyl-radical transfer in the coenzyme B(12) dependent enzyme glutamate mutase.</title>
        <authorList>
            <person name="Gruber K."/>
            <person name="Reitzer R."/>
            <person name="Kratky C."/>
        </authorList>
    </citation>
    <scope>X-RAY CRYSTALLOGRAPHY (1.90 ANGSTROMS) IN COMPLEX WITH COBALAMIN ANALOGS AND SUBSTRATE</scope>
    <scope>COFACTOR</scope>
    <scope>SUBUNIT</scope>
</reference>
<organism>
    <name type="scientific">Clostridium cochlearium</name>
    <dbReference type="NCBI Taxonomy" id="1494"/>
    <lineage>
        <taxon>Bacteria</taxon>
        <taxon>Bacillati</taxon>
        <taxon>Bacillota</taxon>
        <taxon>Clostridia</taxon>
        <taxon>Eubacteriales</taxon>
        <taxon>Clostridiaceae</taxon>
        <taxon>Clostridium</taxon>
    </lineage>
</organism>